<evidence type="ECO:0000255" key="1">
    <source>
        <dbReference type="HAMAP-Rule" id="MF_00172"/>
    </source>
</evidence>
<proteinExistence type="inferred from homology"/>
<dbReference type="EC" id="2.1.1.14" evidence="1"/>
<dbReference type="EMBL" id="CP000155">
    <property type="protein sequence ID" value="ABC28050.1"/>
    <property type="molecule type" value="Genomic_DNA"/>
</dbReference>
<dbReference type="RefSeq" id="WP_011395125.1">
    <property type="nucleotide sequence ID" value="NC_007645.1"/>
</dbReference>
<dbReference type="SMR" id="Q2SMS4"/>
<dbReference type="STRING" id="349521.HCH_01174"/>
<dbReference type="KEGG" id="hch:HCH_01174"/>
<dbReference type="eggNOG" id="COG0620">
    <property type="taxonomic scope" value="Bacteria"/>
</dbReference>
<dbReference type="HOGENOM" id="CLU_013175_0_0_6"/>
<dbReference type="OrthoDB" id="244285at2"/>
<dbReference type="UniPathway" id="UPA00051">
    <property type="reaction ID" value="UER00082"/>
</dbReference>
<dbReference type="Proteomes" id="UP000000238">
    <property type="component" value="Chromosome"/>
</dbReference>
<dbReference type="GO" id="GO:0003871">
    <property type="term" value="F:5-methyltetrahydropteroyltriglutamate-homocysteine S-methyltransferase activity"/>
    <property type="evidence" value="ECO:0007669"/>
    <property type="project" value="UniProtKB-UniRule"/>
</dbReference>
<dbReference type="GO" id="GO:0008270">
    <property type="term" value="F:zinc ion binding"/>
    <property type="evidence" value="ECO:0007669"/>
    <property type="project" value="InterPro"/>
</dbReference>
<dbReference type="GO" id="GO:0009086">
    <property type="term" value="P:methionine biosynthetic process"/>
    <property type="evidence" value="ECO:0007669"/>
    <property type="project" value="UniProtKB-UniRule"/>
</dbReference>
<dbReference type="GO" id="GO:0032259">
    <property type="term" value="P:methylation"/>
    <property type="evidence" value="ECO:0007669"/>
    <property type="project" value="UniProtKB-KW"/>
</dbReference>
<dbReference type="CDD" id="cd03311">
    <property type="entry name" value="CIMS_C_terminal_like"/>
    <property type="match status" value="1"/>
</dbReference>
<dbReference type="CDD" id="cd03312">
    <property type="entry name" value="CIMS_N_terminal_like"/>
    <property type="match status" value="1"/>
</dbReference>
<dbReference type="FunFam" id="3.20.20.210:FF:000002">
    <property type="entry name" value="5-methyltetrahydropteroyltriglutamate--homocysteine methyltransferase"/>
    <property type="match status" value="1"/>
</dbReference>
<dbReference type="FunFam" id="3.20.20.210:FF:000003">
    <property type="entry name" value="5-methyltetrahydropteroyltriglutamate--homocysteine methyltransferase"/>
    <property type="match status" value="1"/>
</dbReference>
<dbReference type="Gene3D" id="3.20.20.210">
    <property type="match status" value="2"/>
</dbReference>
<dbReference type="HAMAP" id="MF_00172">
    <property type="entry name" value="Meth_synth"/>
    <property type="match status" value="1"/>
</dbReference>
<dbReference type="InterPro" id="IPR013215">
    <property type="entry name" value="Cbl-indep_Met_Synth_N"/>
</dbReference>
<dbReference type="InterPro" id="IPR006276">
    <property type="entry name" value="Cobalamin-indep_Met_synthase"/>
</dbReference>
<dbReference type="InterPro" id="IPR002629">
    <property type="entry name" value="Met_Synth_C/arc"/>
</dbReference>
<dbReference type="InterPro" id="IPR038071">
    <property type="entry name" value="UROD/MetE-like_sf"/>
</dbReference>
<dbReference type="NCBIfam" id="TIGR01371">
    <property type="entry name" value="met_syn_B12ind"/>
    <property type="match status" value="1"/>
</dbReference>
<dbReference type="NCBIfam" id="NF003556">
    <property type="entry name" value="PRK05222.1"/>
    <property type="match status" value="1"/>
</dbReference>
<dbReference type="PANTHER" id="PTHR30519">
    <property type="entry name" value="5-METHYLTETRAHYDROPTEROYLTRIGLUTAMATE--HOMOCYSTEINE METHYLTRANSFERASE"/>
    <property type="match status" value="1"/>
</dbReference>
<dbReference type="Pfam" id="PF08267">
    <property type="entry name" value="Meth_synt_1"/>
    <property type="match status" value="1"/>
</dbReference>
<dbReference type="Pfam" id="PF01717">
    <property type="entry name" value="Meth_synt_2"/>
    <property type="match status" value="1"/>
</dbReference>
<dbReference type="PIRSF" id="PIRSF000382">
    <property type="entry name" value="MeTrfase_B12_ind"/>
    <property type="match status" value="1"/>
</dbReference>
<dbReference type="SUPFAM" id="SSF51726">
    <property type="entry name" value="UROD/MetE-like"/>
    <property type="match status" value="2"/>
</dbReference>
<name>METE_HAHCH</name>
<sequence>MITTHNLGFPRIGAKRELKFAQEDYWKGRISQEELLNVGAELRQRHWRNQSQLDLTPVGDFSFYDQVLDMSFTLGVIPERVSRLQGGELDNYFRVARGRSAQDSDCHCVHAGEMTKWFDTNYHYIVPEFTADTAFSLNPSRLLAEIAEAKQTGATIKPVIIGPVTYLWLGKSKDSSNKLDLLERLLPVYAALLDVLANQGVEWVQIDEPILVTELDAEWKYALNLAYHTLKSSKAKLLLATYFGQLQDNLQLACELPVGGLHVDAINGRAEIGKLIDWLPSHKVLSLGVVNGRNIWKTDLNQTLDWLQPVYDKLQSRLWLAPSCSLLHSPVDLDSEEKMDAEIKSWLAFALQKLDEVKILATALSEGRNTVADALKENQDCVSSRKHSPRVHNPAVKEAVEAITAEMGDRRSDYQTRAARQAQRLQLPAFPTTTIGSFPQTADIRNARRRYRQGELQDNEYRTLMQQEIERCVREQENLGLDVLVHGEAERNDMVEYFGEQLDGYVFSQFGWVQSYGSRCVKPPIIFGDISRPQAMTVEWIKYAQSLTDRPMKGMLTGPVTILNWSFVRDDQPRALTCYQLALAIRAEVQDLERAGVRIIQIDEAALREGLPLRRAQWREYLQWAVSSFRIAANGVADETQIHTHMCYSEFNDIIEAIAGMDADVITIETSRSDMELLDAFDNFKYPNEIGPGVYDIHSPNIPSETHIVQLMRKAAERIPAHRLWVNPDCGLKTRNWEEVRPALQNMVNAAKQLRADVVAA</sequence>
<keyword id="KW-0028">Amino-acid biosynthesis</keyword>
<keyword id="KW-0479">Metal-binding</keyword>
<keyword id="KW-0486">Methionine biosynthesis</keyword>
<keyword id="KW-0489">Methyltransferase</keyword>
<keyword id="KW-1185">Reference proteome</keyword>
<keyword id="KW-0677">Repeat</keyword>
<keyword id="KW-0808">Transferase</keyword>
<keyword id="KW-0862">Zinc</keyword>
<organism>
    <name type="scientific">Hahella chejuensis (strain KCTC 2396)</name>
    <dbReference type="NCBI Taxonomy" id="349521"/>
    <lineage>
        <taxon>Bacteria</taxon>
        <taxon>Pseudomonadati</taxon>
        <taxon>Pseudomonadota</taxon>
        <taxon>Gammaproteobacteria</taxon>
        <taxon>Oceanospirillales</taxon>
        <taxon>Hahellaceae</taxon>
        <taxon>Hahella</taxon>
    </lineage>
</organism>
<accession>Q2SMS4</accession>
<feature type="chain" id="PRO_1000017248" description="5-methyltetrahydropteroyltriglutamate--homocysteine methyltransferase">
    <location>
        <begin position="1"/>
        <end position="761"/>
    </location>
</feature>
<feature type="active site" description="Proton donor" evidence="1">
    <location>
        <position position="698"/>
    </location>
</feature>
<feature type="binding site" evidence="1">
    <location>
        <begin position="16"/>
        <end position="19"/>
    </location>
    <ligand>
        <name>5-methyltetrahydropteroyltri-L-glutamate</name>
        <dbReference type="ChEBI" id="CHEBI:58207"/>
    </ligand>
</feature>
<feature type="binding site" evidence="1">
    <location>
        <position position="116"/>
    </location>
    <ligand>
        <name>5-methyltetrahydropteroyltri-L-glutamate</name>
        <dbReference type="ChEBI" id="CHEBI:58207"/>
    </ligand>
</feature>
<feature type="binding site" evidence="1">
    <location>
        <begin position="435"/>
        <end position="437"/>
    </location>
    <ligand>
        <name>L-homocysteine</name>
        <dbReference type="ChEBI" id="CHEBI:58199"/>
    </ligand>
</feature>
<feature type="binding site" evidence="1">
    <location>
        <begin position="435"/>
        <end position="437"/>
    </location>
    <ligand>
        <name>L-methionine</name>
        <dbReference type="ChEBI" id="CHEBI:57844"/>
    </ligand>
</feature>
<feature type="binding site" evidence="1">
    <location>
        <position position="488"/>
    </location>
    <ligand>
        <name>L-homocysteine</name>
        <dbReference type="ChEBI" id="CHEBI:58199"/>
    </ligand>
</feature>
<feature type="binding site" evidence="1">
    <location>
        <position position="488"/>
    </location>
    <ligand>
        <name>L-methionine</name>
        <dbReference type="ChEBI" id="CHEBI:57844"/>
    </ligand>
</feature>
<feature type="binding site" evidence="1">
    <location>
        <begin position="519"/>
        <end position="520"/>
    </location>
    <ligand>
        <name>5-methyltetrahydropteroyltri-L-glutamate</name>
        <dbReference type="ChEBI" id="CHEBI:58207"/>
    </ligand>
</feature>
<feature type="binding site" evidence="1">
    <location>
        <position position="565"/>
    </location>
    <ligand>
        <name>5-methyltetrahydropteroyltri-L-glutamate</name>
        <dbReference type="ChEBI" id="CHEBI:58207"/>
    </ligand>
</feature>
<feature type="binding site" evidence="1">
    <location>
        <position position="603"/>
    </location>
    <ligand>
        <name>L-homocysteine</name>
        <dbReference type="ChEBI" id="CHEBI:58199"/>
    </ligand>
</feature>
<feature type="binding site" evidence="1">
    <location>
        <position position="603"/>
    </location>
    <ligand>
        <name>L-methionine</name>
        <dbReference type="ChEBI" id="CHEBI:57844"/>
    </ligand>
</feature>
<feature type="binding site" evidence="1">
    <location>
        <position position="609"/>
    </location>
    <ligand>
        <name>5-methyltetrahydropteroyltri-L-glutamate</name>
        <dbReference type="ChEBI" id="CHEBI:58207"/>
    </ligand>
</feature>
<feature type="binding site" evidence="1">
    <location>
        <position position="645"/>
    </location>
    <ligand>
        <name>Zn(2+)</name>
        <dbReference type="ChEBI" id="CHEBI:29105"/>
        <note>catalytic</note>
    </ligand>
</feature>
<feature type="binding site" evidence="1">
    <location>
        <position position="647"/>
    </location>
    <ligand>
        <name>Zn(2+)</name>
        <dbReference type="ChEBI" id="CHEBI:29105"/>
        <note>catalytic</note>
    </ligand>
</feature>
<feature type="binding site" evidence="1">
    <location>
        <position position="669"/>
    </location>
    <ligand>
        <name>Zn(2+)</name>
        <dbReference type="ChEBI" id="CHEBI:29105"/>
        <note>catalytic</note>
    </ligand>
</feature>
<feature type="binding site" evidence="1">
    <location>
        <position position="730"/>
    </location>
    <ligand>
        <name>Zn(2+)</name>
        <dbReference type="ChEBI" id="CHEBI:29105"/>
        <note>catalytic</note>
    </ligand>
</feature>
<gene>
    <name evidence="1" type="primary">metE</name>
    <name type="ordered locus">HCH_01174</name>
</gene>
<protein>
    <recommendedName>
        <fullName evidence="1">5-methyltetrahydropteroyltriglutamate--homocysteine methyltransferase</fullName>
        <ecNumber evidence="1">2.1.1.14</ecNumber>
    </recommendedName>
    <alternativeName>
        <fullName evidence="1">Cobalamin-independent methionine synthase</fullName>
    </alternativeName>
    <alternativeName>
        <fullName evidence="1">Methionine synthase, vitamin-B12 independent isozyme</fullName>
    </alternativeName>
</protein>
<reference key="1">
    <citation type="journal article" date="2005" name="Nucleic Acids Res.">
        <title>Genomic blueprint of Hahella chejuensis, a marine microbe producing an algicidal agent.</title>
        <authorList>
            <person name="Jeong H."/>
            <person name="Yim J.H."/>
            <person name="Lee C."/>
            <person name="Choi S.-H."/>
            <person name="Park Y.K."/>
            <person name="Yoon S.H."/>
            <person name="Hur C.-G."/>
            <person name="Kang H.-Y."/>
            <person name="Kim D."/>
            <person name="Lee H.H."/>
            <person name="Park K.H."/>
            <person name="Park S.-H."/>
            <person name="Park H.-S."/>
            <person name="Lee H.K."/>
            <person name="Oh T.K."/>
            <person name="Kim J.F."/>
        </authorList>
    </citation>
    <scope>NUCLEOTIDE SEQUENCE [LARGE SCALE GENOMIC DNA]</scope>
    <source>
        <strain>KCTC 2396</strain>
    </source>
</reference>
<comment type="function">
    <text evidence="1">Catalyzes the transfer of a methyl group from 5-methyltetrahydrofolate to homocysteine resulting in methionine formation.</text>
</comment>
<comment type="catalytic activity">
    <reaction evidence="1">
        <text>5-methyltetrahydropteroyltri-L-glutamate + L-homocysteine = tetrahydropteroyltri-L-glutamate + L-methionine</text>
        <dbReference type="Rhea" id="RHEA:21196"/>
        <dbReference type="ChEBI" id="CHEBI:57844"/>
        <dbReference type="ChEBI" id="CHEBI:58140"/>
        <dbReference type="ChEBI" id="CHEBI:58199"/>
        <dbReference type="ChEBI" id="CHEBI:58207"/>
        <dbReference type="EC" id="2.1.1.14"/>
    </reaction>
</comment>
<comment type="cofactor">
    <cofactor evidence="1">
        <name>Zn(2+)</name>
        <dbReference type="ChEBI" id="CHEBI:29105"/>
    </cofactor>
    <text evidence="1">Binds 1 zinc ion per subunit.</text>
</comment>
<comment type="pathway">
    <text evidence="1">Amino-acid biosynthesis; L-methionine biosynthesis via de novo pathway; L-methionine from L-homocysteine (MetE route): step 1/1.</text>
</comment>
<comment type="similarity">
    <text evidence="1">Belongs to the vitamin-B12 independent methionine synthase family.</text>
</comment>